<comment type="function">
    <text evidence="1">Bifunctional serine/threonine kinase and phosphorylase involved in the regulation of the phosphoenolpyruvate synthase (PEPS) by catalyzing its phosphorylation/dephosphorylation.</text>
</comment>
<comment type="catalytic activity">
    <reaction evidence="1">
        <text>[pyruvate, water dikinase] + ADP = [pyruvate, water dikinase]-phosphate + AMP + H(+)</text>
        <dbReference type="Rhea" id="RHEA:46020"/>
        <dbReference type="Rhea" id="RHEA-COMP:11425"/>
        <dbReference type="Rhea" id="RHEA-COMP:11426"/>
        <dbReference type="ChEBI" id="CHEBI:15378"/>
        <dbReference type="ChEBI" id="CHEBI:43176"/>
        <dbReference type="ChEBI" id="CHEBI:68546"/>
        <dbReference type="ChEBI" id="CHEBI:456215"/>
        <dbReference type="ChEBI" id="CHEBI:456216"/>
        <dbReference type="EC" id="2.7.11.33"/>
    </reaction>
</comment>
<comment type="catalytic activity">
    <reaction evidence="1">
        <text>[pyruvate, water dikinase]-phosphate + phosphate + H(+) = [pyruvate, water dikinase] + diphosphate</text>
        <dbReference type="Rhea" id="RHEA:48580"/>
        <dbReference type="Rhea" id="RHEA-COMP:11425"/>
        <dbReference type="Rhea" id="RHEA-COMP:11426"/>
        <dbReference type="ChEBI" id="CHEBI:15378"/>
        <dbReference type="ChEBI" id="CHEBI:33019"/>
        <dbReference type="ChEBI" id="CHEBI:43176"/>
        <dbReference type="ChEBI" id="CHEBI:43474"/>
        <dbReference type="ChEBI" id="CHEBI:68546"/>
        <dbReference type="EC" id="2.7.4.28"/>
    </reaction>
</comment>
<comment type="similarity">
    <text evidence="1">Belongs to the pyruvate, phosphate/water dikinase regulatory protein family. PSRP subfamily.</text>
</comment>
<evidence type="ECO:0000255" key="1">
    <source>
        <dbReference type="HAMAP-Rule" id="MF_01062"/>
    </source>
</evidence>
<name>PSRP_BORPE</name>
<feature type="chain" id="PRO_0000196637" description="Putative phosphoenolpyruvate synthase regulatory protein">
    <location>
        <begin position="1"/>
        <end position="275"/>
    </location>
</feature>
<feature type="binding site" evidence="1">
    <location>
        <begin position="157"/>
        <end position="164"/>
    </location>
    <ligand>
        <name>ADP</name>
        <dbReference type="ChEBI" id="CHEBI:456216"/>
    </ligand>
</feature>
<dbReference type="EC" id="2.7.11.33" evidence="1"/>
<dbReference type="EC" id="2.7.4.28" evidence="1"/>
<dbReference type="EMBL" id="BX640415">
    <property type="protein sequence ID" value="CAE41725.1"/>
    <property type="molecule type" value="Genomic_DNA"/>
</dbReference>
<dbReference type="RefSeq" id="NP_880177.1">
    <property type="nucleotide sequence ID" value="NC_002929.2"/>
</dbReference>
<dbReference type="RefSeq" id="WP_010930357.1">
    <property type="nucleotide sequence ID" value="NZ_CP039022.1"/>
</dbReference>
<dbReference type="SMR" id="Q7VYB4"/>
<dbReference type="STRING" id="257313.BP1435"/>
<dbReference type="PaxDb" id="257313-BP1435"/>
<dbReference type="KEGG" id="bpe:BP1435"/>
<dbReference type="PATRIC" id="fig|257313.5.peg.1538"/>
<dbReference type="eggNOG" id="COG1806">
    <property type="taxonomic scope" value="Bacteria"/>
</dbReference>
<dbReference type="HOGENOM" id="CLU_046206_1_0_4"/>
<dbReference type="Proteomes" id="UP000002676">
    <property type="component" value="Chromosome"/>
</dbReference>
<dbReference type="GO" id="GO:0043531">
    <property type="term" value="F:ADP binding"/>
    <property type="evidence" value="ECO:0007669"/>
    <property type="project" value="UniProtKB-UniRule"/>
</dbReference>
<dbReference type="GO" id="GO:0005524">
    <property type="term" value="F:ATP binding"/>
    <property type="evidence" value="ECO:0007669"/>
    <property type="project" value="InterPro"/>
</dbReference>
<dbReference type="GO" id="GO:0016776">
    <property type="term" value="F:phosphotransferase activity, phosphate group as acceptor"/>
    <property type="evidence" value="ECO:0007669"/>
    <property type="project" value="UniProtKB-UniRule"/>
</dbReference>
<dbReference type="GO" id="GO:0004674">
    <property type="term" value="F:protein serine/threonine kinase activity"/>
    <property type="evidence" value="ECO:0007669"/>
    <property type="project" value="UniProtKB-UniRule"/>
</dbReference>
<dbReference type="HAMAP" id="MF_01062">
    <property type="entry name" value="PSRP"/>
    <property type="match status" value="1"/>
</dbReference>
<dbReference type="InterPro" id="IPR005177">
    <property type="entry name" value="Kinase-pyrophosphorylase"/>
</dbReference>
<dbReference type="InterPro" id="IPR026530">
    <property type="entry name" value="PSRP"/>
</dbReference>
<dbReference type="NCBIfam" id="NF003742">
    <property type="entry name" value="PRK05339.1"/>
    <property type="match status" value="1"/>
</dbReference>
<dbReference type="PANTHER" id="PTHR31756">
    <property type="entry name" value="PYRUVATE, PHOSPHATE DIKINASE REGULATORY PROTEIN 1, CHLOROPLASTIC"/>
    <property type="match status" value="1"/>
</dbReference>
<dbReference type="PANTHER" id="PTHR31756:SF3">
    <property type="entry name" value="PYRUVATE, PHOSPHATE DIKINASE REGULATORY PROTEIN 1, CHLOROPLASTIC"/>
    <property type="match status" value="1"/>
</dbReference>
<dbReference type="Pfam" id="PF03618">
    <property type="entry name" value="Kinase-PPPase"/>
    <property type="match status" value="1"/>
</dbReference>
<reference key="1">
    <citation type="journal article" date="2003" name="Nat. Genet.">
        <title>Comparative analysis of the genome sequences of Bordetella pertussis, Bordetella parapertussis and Bordetella bronchiseptica.</title>
        <authorList>
            <person name="Parkhill J."/>
            <person name="Sebaihia M."/>
            <person name="Preston A."/>
            <person name="Murphy L.D."/>
            <person name="Thomson N.R."/>
            <person name="Harris D.E."/>
            <person name="Holden M.T.G."/>
            <person name="Churcher C.M."/>
            <person name="Bentley S.D."/>
            <person name="Mungall K.L."/>
            <person name="Cerdeno-Tarraga A.-M."/>
            <person name="Temple L."/>
            <person name="James K.D."/>
            <person name="Harris B."/>
            <person name="Quail M.A."/>
            <person name="Achtman M."/>
            <person name="Atkin R."/>
            <person name="Baker S."/>
            <person name="Basham D."/>
            <person name="Bason N."/>
            <person name="Cherevach I."/>
            <person name="Chillingworth T."/>
            <person name="Collins M."/>
            <person name="Cronin A."/>
            <person name="Davis P."/>
            <person name="Doggett J."/>
            <person name="Feltwell T."/>
            <person name="Goble A."/>
            <person name="Hamlin N."/>
            <person name="Hauser H."/>
            <person name="Holroyd S."/>
            <person name="Jagels K."/>
            <person name="Leather S."/>
            <person name="Moule S."/>
            <person name="Norberczak H."/>
            <person name="O'Neil S."/>
            <person name="Ormond D."/>
            <person name="Price C."/>
            <person name="Rabbinowitsch E."/>
            <person name="Rutter S."/>
            <person name="Sanders M."/>
            <person name="Saunders D."/>
            <person name="Seeger K."/>
            <person name="Sharp S."/>
            <person name="Simmonds M."/>
            <person name="Skelton J."/>
            <person name="Squares R."/>
            <person name="Squares S."/>
            <person name="Stevens K."/>
            <person name="Unwin L."/>
            <person name="Whitehead S."/>
            <person name="Barrell B.G."/>
            <person name="Maskell D.J."/>
        </authorList>
    </citation>
    <scope>NUCLEOTIDE SEQUENCE [LARGE SCALE GENOMIC DNA]</scope>
    <source>
        <strain>Tohama I / ATCC BAA-589 / NCTC 13251</strain>
    </source>
</reference>
<gene>
    <name type="ordered locus">BP1435</name>
</gene>
<organism>
    <name type="scientific">Bordetella pertussis (strain Tohama I / ATCC BAA-589 / NCTC 13251)</name>
    <dbReference type="NCBI Taxonomy" id="257313"/>
    <lineage>
        <taxon>Bacteria</taxon>
        <taxon>Pseudomonadati</taxon>
        <taxon>Pseudomonadota</taxon>
        <taxon>Betaproteobacteria</taxon>
        <taxon>Burkholderiales</taxon>
        <taxon>Alcaligenaceae</taxon>
        <taxon>Bordetella</taxon>
    </lineage>
</organism>
<sequence length="275" mass="30726">MTSTPIERAVYIVSDSTGITAETFSHSVLSQFDEVNFKPVRLPFIDTLDKAREVVARINRNALEAGVPPIVFSTLVNPEILALVRQSNGVFLDLFGTFVSHIEQALGLKSSHSIGRSHMAANSEKYRNRIDAINFSLAHDDGQFVNQLDQADVILLGVSRCGKTPTSLYLAMQYAVKAANFPLTPDDFERGALPKTIAPYRGKLFGLSIQPERLAEVRNERRPNSHYARLEQCRYEVAEAERMMRREGISWLSTTTKSIEEIATTVLQEVGLERV</sequence>
<keyword id="KW-0418">Kinase</keyword>
<keyword id="KW-0547">Nucleotide-binding</keyword>
<keyword id="KW-1185">Reference proteome</keyword>
<keyword id="KW-0723">Serine/threonine-protein kinase</keyword>
<keyword id="KW-0808">Transferase</keyword>
<proteinExistence type="inferred from homology"/>
<accession>Q7VYB4</accession>
<protein>
    <recommendedName>
        <fullName evidence="1">Putative phosphoenolpyruvate synthase regulatory protein</fullName>
        <shortName evidence="1">PEP synthase regulatory protein</shortName>
        <shortName evidence="1">PSRP</shortName>
        <ecNumber evidence="1">2.7.11.33</ecNumber>
        <ecNumber evidence="1">2.7.4.28</ecNumber>
    </recommendedName>
    <alternativeName>
        <fullName evidence="1">Pyruvate, water dikinase regulatory protein</fullName>
    </alternativeName>
</protein>